<accession>Q71G51</accession>
<gene>
    <name type="primary">TUBA</name>
</gene>
<feature type="chain" id="PRO_0000048198" description="Tubulin alpha chain">
    <location>
        <begin position="1"/>
        <end position="453"/>
    </location>
</feature>
<feature type="active site" evidence="2">
    <location>
        <position position="254"/>
    </location>
</feature>
<feature type="binding site" evidence="2">
    <location>
        <position position="11"/>
    </location>
    <ligand>
        <name>GTP</name>
        <dbReference type="ChEBI" id="CHEBI:37565"/>
    </ligand>
</feature>
<feature type="binding site" evidence="2">
    <location>
        <position position="71"/>
    </location>
    <ligand>
        <name>GTP</name>
        <dbReference type="ChEBI" id="CHEBI:37565"/>
    </ligand>
</feature>
<feature type="binding site" evidence="2">
    <location>
        <position position="71"/>
    </location>
    <ligand>
        <name>Mg(2+)</name>
        <dbReference type="ChEBI" id="CHEBI:18420"/>
    </ligand>
</feature>
<feature type="binding site" evidence="2">
    <location>
        <position position="144"/>
    </location>
    <ligand>
        <name>GTP</name>
        <dbReference type="ChEBI" id="CHEBI:37565"/>
    </ligand>
</feature>
<feature type="binding site" evidence="2">
    <location>
        <position position="145"/>
    </location>
    <ligand>
        <name>GTP</name>
        <dbReference type="ChEBI" id="CHEBI:37565"/>
    </ligand>
</feature>
<feature type="binding site" evidence="2">
    <location>
        <position position="179"/>
    </location>
    <ligand>
        <name>GTP</name>
        <dbReference type="ChEBI" id="CHEBI:37565"/>
    </ligand>
</feature>
<feature type="binding site" evidence="2">
    <location>
        <position position="206"/>
    </location>
    <ligand>
        <name>GTP</name>
        <dbReference type="ChEBI" id="CHEBI:37565"/>
    </ligand>
</feature>
<feature type="binding site" evidence="2">
    <location>
        <position position="228"/>
    </location>
    <ligand>
        <name>GTP</name>
        <dbReference type="ChEBI" id="CHEBI:37565"/>
    </ligand>
</feature>
<feature type="site" description="Involved in polymerization">
    <location>
        <position position="453"/>
    </location>
</feature>
<feature type="modified residue" description="N6-acetyllysine" evidence="1">
    <location>
        <position position="40"/>
    </location>
</feature>
<dbReference type="EC" id="3.6.5.-" evidence="2"/>
<dbReference type="EMBL" id="AF508031">
    <property type="protein sequence ID" value="AAO15882.1"/>
    <property type="molecule type" value="mRNA"/>
</dbReference>
<dbReference type="SMR" id="Q71G51"/>
<dbReference type="VEuPathDB" id="ToxoDB:Ncaninum_LIV_000353100"/>
<dbReference type="VEuPathDB" id="ToxoDB:NCLIV_058890"/>
<dbReference type="OMA" id="YMASCIL"/>
<dbReference type="GO" id="GO:0005737">
    <property type="term" value="C:cytoplasm"/>
    <property type="evidence" value="ECO:0007669"/>
    <property type="project" value="UniProtKB-KW"/>
</dbReference>
<dbReference type="GO" id="GO:0005874">
    <property type="term" value="C:microtubule"/>
    <property type="evidence" value="ECO:0007669"/>
    <property type="project" value="UniProtKB-KW"/>
</dbReference>
<dbReference type="GO" id="GO:0005525">
    <property type="term" value="F:GTP binding"/>
    <property type="evidence" value="ECO:0007669"/>
    <property type="project" value="UniProtKB-KW"/>
</dbReference>
<dbReference type="GO" id="GO:0016787">
    <property type="term" value="F:hydrolase activity"/>
    <property type="evidence" value="ECO:0007669"/>
    <property type="project" value="UniProtKB-KW"/>
</dbReference>
<dbReference type="GO" id="GO:0046872">
    <property type="term" value="F:metal ion binding"/>
    <property type="evidence" value="ECO:0007669"/>
    <property type="project" value="UniProtKB-KW"/>
</dbReference>
<dbReference type="GO" id="GO:0005200">
    <property type="term" value="F:structural constituent of cytoskeleton"/>
    <property type="evidence" value="ECO:0007669"/>
    <property type="project" value="InterPro"/>
</dbReference>
<dbReference type="GO" id="GO:0007017">
    <property type="term" value="P:microtubule-based process"/>
    <property type="evidence" value="ECO:0007669"/>
    <property type="project" value="InterPro"/>
</dbReference>
<dbReference type="CDD" id="cd02186">
    <property type="entry name" value="alpha_tubulin"/>
    <property type="match status" value="1"/>
</dbReference>
<dbReference type="FunFam" id="1.10.287.600:FF:000005">
    <property type="entry name" value="Tubulin alpha chain"/>
    <property type="match status" value="1"/>
</dbReference>
<dbReference type="FunFam" id="3.30.1330.20:FF:000001">
    <property type="entry name" value="Tubulin alpha chain"/>
    <property type="match status" value="1"/>
</dbReference>
<dbReference type="FunFam" id="3.40.50.1440:FF:000004">
    <property type="entry name" value="Tubulin alpha chain"/>
    <property type="match status" value="1"/>
</dbReference>
<dbReference type="Gene3D" id="1.10.287.600">
    <property type="entry name" value="Helix hairpin bin"/>
    <property type="match status" value="1"/>
</dbReference>
<dbReference type="Gene3D" id="3.30.1330.20">
    <property type="entry name" value="Tubulin/FtsZ, C-terminal domain"/>
    <property type="match status" value="1"/>
</dbReference>
<dbReference type="Gene3D" id="3.40.50.1440">
    <property type="entry name" value="Tubulin/FtsZ, GTPase domain"/>
    <property type="match status" value="1"/>
</dbReference>
<dbReference type="InterPro" id="IPR002452">
    <property type="entry name" value="Alpha_tubulin"/>
</dbReference>
<dbReference type="InterPro" id="IPR008280">
    <property type="entry name" value="Tub_FtsZ_C"/>
</dbReference>
<dbReference type="InterPro" id="IPR000217">
    <property type="entry name" value="Tubulin"/>
</dbReference>
<dbReference type="InterPro" id="IPR037103">
    <property type="entry name" value="Tubulin/FtsZ-like_C"/>
</dbReference>
<dbReference type="InterPro" id="IPR018316">
    <property type="entry name" value="Tubulin/FtsZ_2-layer-sand-dom"/>
</dbReference>
<dbReference type="InterPro" id="IPR036525">
    <property type="entry name" value="Tubulin/FtsZ_GTPase_sf"/>
</dbReference>
<dbReference type="InterPro" id="IPR023123">
    <property type="entry name" value="Tubulin_C"/>
</dbReference>
<dbReference type="InterPro" id="IPR017975">
    <property type="entry name" value="Tubulin_CS"/>
</dbReference>
<dbReference type="InterPro" id="IPR003008">
    <property type="entry name" value="Tubulin_FtsZ_GTPase"/>
</dbReference>
<dbReference type="PANTHER" id="PTHR11588">
    <property type="entry name" value="TUBULIN"/>
    <property type="match status" value="1"/>
</dbReference>
<dbReference type="Pfam" id="PF00091">
    <property type="entry name" value="Tubulin"/>
    <property type="match status" value="1"/>
</dbReference>
<dbReference type="Pfam" id="PF03953">
    <property type="entry name" value="Tubulin_C"/>
    <property type="match status" value="1"/>
</dbReference>
<dbReference type="PRINTS" id="PR01162">
    <property type="entry name" value="ALPHATUBULIN"/>
</dbReference>
<dbReference type="PRINTS" id="PR01161">
    <property type="entry name" value="TUBULIN"/>
</dbReference>
<dbReference type="SMART" id="SM00864">
    <property type="entry name" value="Tubulin"/>
    <property type="match status" value="1"/>
</dbReference>
<dbReference type="SMART" id="SM00865">
    <property type="entry name" value="Tubulin_C"/>
    <property type="match status" value="1"/>
</dbReference>
<dbReference type="SUPFAM" id="SSF55307">
    <property type="entry name" value="Tubulin C-terminal domain-like"/>
    <property type="match status" value="1"/>
</dbReference>
<dbReference type="SUPFAM" id="SSF52490">
    <property type="entry name" value="Tubulin nucleotide-binding domain-like"/>
    <property type="match status" value="1"/>
</dbReference>
<dbReference type="PROSITE" id="PS00227">
    <property type="entry name" value="TUBULIN"/>
    <property type="match status" value="1"/>
</dbReference>
<comment type="function">
    <text>Tubulin is the major constituent of microtubules, a cylinder consisting of laterally associated linear protofilaments composed of alpha- and beta-tubulin heterodimers. Microtubules grow by the addition of GTP-tubulin dimers to the microtubule end, where a stabilizing cap forms. Below the cap, tubulin dimers are in GDP-bound state, owing to GTPase activity of alpha-tubulin.</text>
</comment>
<comment type="catalytic activity">
    <reaction evidence="2">
        <text>GTP + H2O = GDP + phosphate + H(+)</text>
        <dbReference type="Rhea" id="RHEA:19669"/>
        <dbReference type="ChEBI" id="CHEBI:15377"/>
        <dbReference type="ChEBI" id="CHEBI:15378"/>
        <dbReference type="ChEBI" id="CHEBI:37565"/>
        <dbReference type="ChEBI" id="CHEBI:43474"/>
        <dbReference type="ChEBI" id="CHEBI:58189"/>
    </reaction>
    <physiologicalReaction direction="left-to-right" evidence="2">
        <dbReference type="Rhea" id="RHEA:19670"/>
    </physiologicalReaction>
</comment>
<comment type="cofactor">
    <cofactor evidence="2">
        <name>Mg(2+)</name>
        <dbReference type="ChEBI" id="CHEBI:18420"/>
    </cofactor>
</comment>
<comment type="subunit">
    <text>Dimer of alpha and beta chains. A typical microtubule is a hollow water-filled tube with an outer diameter of 25 nm and an inner diameter of 15 nM. Alpha-beta heterodimers associate head-to-tail to form protofilaments running lengthwise along the microtubule wall with the beta-tubulin subunit facing the microtubule plus end conferring a structural polarity. Microtubules usually have 13 protofilaments but different protofilament numbers can be found in some organisms and specialized cells.</text>
</comment>
<comment type="subcellular location">
    <subcellularLocation>
        <location>Cytoplasm</location>
        <location>Cytoskeleton</location>
    </subcellularLocation>
</comment>
<comment type="PTM">
    <text evidence="1">Undergoes a tyrosination/detyrosination cycle, the cyclic removal and re-addition of a C-terminal tyrosine residue by the enzymes tubulin tyrosine carboxypeptidase (TTCP) and tubulin tyrosine ligase (TTL), respectively.</text>
</comment>
<comment type="PTM">
    <text evidence="1">Acetylation of alpha chains at Lys-40 stabilizes microtubules and affects affinity and processivity of microtubule motors. This modification has a role in multiple cellular functions, ranging from cell motility, cell cycle progression or cell differentiation to intracellular trafficking and signaling (By similarity).</text>
</comment>
<comment type="similarity">
    <text evidence="3">Belongs to the tubulin family.</text>
</comment>
<reference key="1">
    <citation type="submission" date="2002-05" db="EMBL/GenBank/DDBJ databases">
        <authorList>
            <person name="Siverajah S."/>
            <person name="Ryce C."/>
            <person name="Ellis J."/>
        </authorList>
    </citation>
    <scope>NUCLEOTIDE SEQUENCE [MRNA]</scope>
</reference>
<organism>
    <name type="scientific">Neospora caninum</name>
    <name type="common">Coccidian parasite</name>
    <dbReference type="NCBI Taxonomy" id="29176"/>
    <lineage>
        <taxon>Eukaryota</taxon>
        <taxon>Sar</taxon>
        <taxon>Alveolata</taxon>
        <taxon>Apicomplexa</taxon>
        <taxon>Conoidasida</taxon>
        <taxon>Coccidia</taxon>
        <taxon>Eucoccidiorida</taxon>
        <taxon>Eimeriorina</taxon>
        <taxon>Sarcocystidae</taxon>
        <taxon>Neospora</taxon>
    </lineage>
</organism>
<protein>
    <recommendedName>
        <fullName>Tubulin alpha chain</fullName>
        <ecNumber evidence="2">3.6.5.-</ecNumber>
    </recommendedName>
    <alternativeName>
        <fullName>Alpha-tubulin</fullName>
    </alternativeName>
</protein>
<keyword id="KW-0007">Acetylation</keyword>
<keyword id="KW-0963">Cytoplasm</keyword>
<keyword id="KW-0206">Cytoskeleton</keyword>
<keyword id="KW-0342">GTP-binding</keyword>
<keyword id="KW-0378">Hydrolase</keyword>
<keyword id="KW-0460">Magnesium</keyword>
<keyword id="KW-0479">Metal-binding</keyword>
<keyword id="KW-0493">Microtubule</keyword>
<keyword id="KW-0547">Nucleotide-binding</keyword>
<evidence type="ECO:0000250" key="1"/>
<evidence type="ECO:0000250" key="2">
    <source>
        <dbReference type="UniProtKB" id="P68363"/>
    </source>
</evidence>
<evidence type="ECO:0000305" key="3"/>
<name>TBA_NEOCA</name>
<proteinExistence type="evidence at transcript level"/>
<sequence>MREVISIHVGQAGIQIGNACWELFCLEHGIQPDGQMPSDKTIGGGDDAFNTFFSETGAGKHVPRCVFLDLEPTVVDEVRTGTYRHLFHPEQLISGKEDAANNFARGHYTIGKEIVDLSLDRIRKLADNCTGLQGFLMFNAVGGGTGSGLGCLLLERLSVDYGKKSKLNFCSWPSPQVSTAVVEPYNSVLSTHSLLEHTDVAVMLDNEAIYDICRRNLDIERPTYTNLNRLIAQVISSLTASLRFDGALNVDVTEFQTNLVPYPRIHFMLSSYAPIISAEKAYHEQLSVAEITNSAFEPASMMAKCDPRHGKYMACCLMYRGDVVPKDVNAAVATIKTKRTIQFVDWCPTGFKCGINYQPPTVVPGGDLAKVMRAVCMISNSTAIAEVFSRMDHKFDLMYAKRAFVHWYVGEGMEEGEFSEAREDLAALEKDYEEVGIETAEGEGEEEGYGDEY</sequence>